<organism>
    <name type="scientific">Pyrenophora teres f. teres (strain 0-1)</name>
    <name type="common">Barley net blotch fungus</name>
    <name type="synonym">Drechslera teres f. teres</name>
    <dbReference type="NCBI Taxonomy" id="861557"/>
    <lineage>
        <taxon>Eukaryota</taxon>
        <taxon>Fungi</taxon>
        <taxon>Dikarya</taxon>
        <taxon>Ascomycota</taxon>
        <taxon>Pezizomycotina</taxon>
        <taxon>Dothideomycetes</taxon>
        <taxon>Pleosporomycetidae</taxon>
        <taxon>Pleosporales</taxon>
        <taxon>Pleosporineae</taxon>
        <taxon>Pleosporaceae</taxon>
        <taxon>Pyrenophora</taxon>
    </lineage>
</organism>
<dbReference type="EC" id="3.4.21.89" evidence="1"/>
<dbReference type="EMBL" id="GL534607">
    <property type="protein sequence ID" value="EFQ91803.1"/>
    <property type="molecule type" value="Genomic_DNA"/>
</dbReference>
<dbReference type="RefSeq" id="XP_003300125.1">
    <property type="nucleotide sequence ID" value="XM_003300077.1"/>
</dbReference>
<dbReference type="SMR" id="E3RR70"/>
<dbReference type="STRING" id="861557.E3RR70"/>
<dbReference type="MEROPS" id="S26.010"/>
<dbReference type="EnsemblFungi" id="EFQ91803">
    <property type="protein sequence ID" value="EFQ91803"/>
    <property type="gene ID" value="PTT_11281"/>
</dbReference>
<dbReference type="KEGG" id="pte:PTT_11281"/>
<dbReference type="eggNOG" id="KOG3342">
    <property type="taxonomic scope" value="Eukaryota"/>
</dbReference>
<dbReference type="HOGENOM" id="CLU_089996_0_0_1"/>
<dbReference type="OrthoDB" id="10257561at2759"/>
<dbReference type="Proteomes" id="UP000001067">
    <property type="component" value="Unassembled WGS sequence"/>
</dbReference>
<dbReference type="GO" id="GO:0005787">
    <property type="term" value="C:signal peptidase complex"/>
    <property type="evidence" value="ECO:0007669"/>
    <property type="project" value="EnsemblFungi"/>
</dbReference>
<dbReference type="GO" id="GO:0004252">
    <property type="term" value="F:serine-type endopeptidase activity"/>
    <property type="evidence" value="ECO:0007669"/>
    <property type="project" value="UniProtKB-EC"/>
</dbReference>
<dbReference type="GO" id="GO:0045047">
    <property type="term" value="P:protein targeting to ER"/>
    <property type="evidence" value="ECO:0007669"/>
    <property type="project" value="EnsemblFungi"/>
</dbReference>
<dbReference type="GO" id="GO:0006465">
    <property type="term" value="P:signal peptide processing"/>
    <property type="evidence" value="ECO:0007669"/>
    <property type="project" value="EnsemblFungi"/>
</dbReference>
<dbReference type="CDD" id="cd06530">
    <property type="entry name" value="S26_SPase_I"/>
    <property type="match status" value="1"/>
</dbReference>
<dbReference type="InterPro" id="IPR036286">
    <property type="entry name" value="LexA/Signal_pep-like_sf"/>
</dbReference>
<dbReference type="InterPro" id="IPR019756">
    <property type="entry name" value="Pept_S26A_signal_pept_1_Ser-AS"/>
</dbReference>
<dbReference type="InterPro" id="IPR019533">
    <property type="entry name" value="Peptidase_S26"/>
</dbReference>
<dbReference type="InterPro" id="IPR001733">
    <property type="entry name" value="Peptidase_S26B"/>
</dbReference>
<dbReference type="NCBIfam" id="TIGR02228">
    <property type="entry name" value="sigpep_I_arch"/>
    <property type="match status" value="1"/>
</dbReference>
<dbReference type="PANTHER" id="PTHR10806">
    <property type="entry name" value="SIGNAL PEPTIDASE COMPLEX CATALYTIC SUBUNIT SEC11"/>
    <property type="match status" value="1"/>
</dbReference>
<dbReference type="PANTHER" id="PTHR10806:SF6">
    <property type="entry name" value="SIGNAL PEPTIDASE COMPLEX CATALYTIC SUBUNIT SEC11"/>
    <property type="match status" value="1"/>
</dbReference>
<dbReference type="PRINTS" id="PR00728">
    <property type="entry name" value="SIGNALPTASE"/>
</dbReference>
<dbReference type="SUPFAM" id="SSF51306">
    <property type="entry name" value="LexA/Signal peptidase"/>
    <property type="match status" value="1"/>
</dbReference>
<dbReference type="PROSITE" id="PS00501">
    <property type="entry name" value="SPASE_I_1"/>
    <property type="match status" value="1"/>
</dbReference>
<feature type="chain" id="PRO_0000412352" description="Signal peptidase complex catalytic subunit sec11">
    <location>
        <begin position="1"/>
        <end position="173"/>
    </location>
</feature>
<feature type="topological domain" description="Cytoplasmic" evidence="4">
    <location>
        <begin position="1"/>
        <end position="15"/>
    </location>
</feature>
<feature type="transmembrane region" description="Helical; Signal-anchor for type II membrane protein" evidence="3">
    <location>
        <begin position="16"/>
        <end position="36"/>
    </location>
</feature>
<feature type="topological domain" description="Lumenal" evidence="4">
    <location>
        <begin position="37"/>
        <end position="173"/>
    </location>
</feature>
<feature type="region of interest" description="C-terminal short (CTS) helix" evidence="2">
    <location>
        <begin position="159"/>
        <end position="170"/>
    </location>
</feature>
<feature type="active site" description="Charge relay system" evidence="1">
    <location>
        <position position="50"/>
    </location>
</feature>
<feature type="active site" description="Charge relay system" evidence="1">
    <location>
        <position position="89"/>
    </location>
</feature>
<feature type="active site" description="Charge relay system" evidence="1">
    <location>
        <position position="115"/>
    </location>
</feature>
<name>SEC11_PYRTT</name>
<sequence>MLGIADMQPRQLAAQVLNFALVLSTAFMMWKGLSAASDSPSPIVVVLSGSMEPAFQRGDLLFLWNRGADTQVGEIVVYNVKGKDIPIVHRVVRRYGGGKTPLRLLTKGDNNLADDTELYAAGQSFLNRQEDVIGSVVGFIPFVGYVTILLSEHPWLKQVMLGMMGVMVVLQRE</sequence>
<gene>
    <name type="primary">sec11</name>
    <name type="ORF">PTT_11281</name>
</gene>
<proteinExistence type="inferred from homology"/>
<keyword id="KW-0256">Endoplasmic reticulum</keyword>
<keyword id="KW-0378">Hydrolase</keyword>
<keyword id="KW-0472">Membrane</keyword>
<keyword id="KW-0645">Protease</keyword>
<keyword id="KW-1185">Reference proteome</keyword>
<keyword id="KW-0735">Signal-anchor</keyword>
<keyword id="KW-0812">Transmembrane</keyword>
<keyword id="KW-1133">Transmembrane helix</keyword>
<protein>
    <recommendedName>
        <fullName>Signal peptidase complex catalytic subunit sec11</fullName>
        <ecNumber evidence="1">3.4.21.89</ecNumber>
    </recommendedName>
    <alternativeName>
        <fullName>Signal peptidase I</fullName>
    </alternativeName>
</protein>
<reference key="1">
    <citation type="journal article" date="2010" name="Genome Biol.">
        <title>A first genome assembly of the barley fungal pathogen Pyrenophora teres f. teres.</title>
        <authorList>
            <person name="Ellwood S.R."/>
            <person name="Liu Z."/>
            <person name="Syme R.A."/>
            <person name="Lai Z."/>
            <person name="Hane J.K."/>
            <person name="Keiper F."/>
            <person name="Moffat C.S."/>
            <person name="Oliver R.P."/>
            <person name="Friesen T.L."/>
        </authorList>
    </citation>
    <scope>NUCLEOTIDE SEQUENCE [LARGE SCALE GENOMIC DNA]</scope>
    <source>
        <strain>0-1</strain>
    </source>
</reference>
<accession>E3RR70</accession>
<evidence type="ECO:0000250" key="1">
    <source>
        <dbReference type="UniProtKB" id="P15367"/>
    </source>
</evidence>
<evidence type="ECO:0000250" key="2">
    <source>
        <dbReference type="UniProtKB" id="P67812"/>
    </source>
</evidence>
<evidence type="ECO:0000255" key="3"/>
<evidence type="ECO:0000305" key="4"/>
<comment type="function">
    <text evidence="1 2">Catalytic component of the signal peptidase complex (SPC) which catalyzes the cleavage of N-terminal signal sequences from nascent proteins as they are translocated into the lumen of the endoplasmic reticulum (By similarity). Specifically cleaves N-terminal signal peptides that contain a hydrophobic alpha-helix (h-region) shorter than 18-20 amino acids (By similarity).</text>
</comment>
<comment type="catalytic activity">
    <reaction evidence="1">
        <text>Cleavage of hydrophobic, N-terminal signal or leader sequences from secreted and periplasmic proteins.</text>
        <dbReference type="EC" id="3.4.21.89"/>
    </reaction>
</comment>
<comment type="subunit">
    <text evidence="1 2">Component of the signal peptidase complex (SPC) composed of a catalytic subunit SEC11 and three accessory subunits SPC1, SPC2 and SPC3 (By similarity). The complex induces a local thinning of the ER membrane which is used to measure the length of the signal peptide (SP) h-region of protein substrates. This ensures the selectivity of the complex towards h-regions shorter than 18-20 amino acids (By similarity). SPC associates with the translocon complex (By similarity).</text>
</comment>
<comment type="subcellular location">
    <subcellularLocation>
        <location evidence="1">Endoplasmic reticulum membrane</location>
        <topology evidence="1">Single-pass type II membrane protein</topology>
    </subcellularLocation>
</comment>
<comment type="domain">
    <text evidence="2">The C-terminal short (CTS) helix is essential for catalytic activity. It may be accommodated as a transmembrane helix in the thinned membrane environment of the complex, similarly to the signal peptide in the complex substrates.</text>
</comment>
<comment type="similarity">
    <text evidence="4">Belongs to the peptidase S26B family.</text>
</comment>